<gene>
    <name evidence="1" type="primary">menD</name>
    <name type="ordered locus">VF_1671</name>
</gene>
<organism>
    <name type="scientific">Aliivibrio fischeri (strain ATCC 700601 / ES114)</name>
    <name type="common">Vibrio fischeri</name>
    <dbReference type="NCBI Taxonomy" id="312309"/>
    <lineage>
        <taxon>Bacteria</taxon>
        <taxon>Pseudomonadati</taxon>
        <taxon>Pseudomonadota</taxon>
        <taxon>Gammaproteobacteria</taxon>
        <taxon>Vibrionales</taxon>
        <taxon>Vibrionaceae</taxon>
        <taxon>Aliivibrio</taxon>
    </lineage>
</organism>
<keyword id="KW-0460">Magnesium</keyword>
<keyword id="KW-0464">Manganese</keyword>
<keyword id="KW-0474">Menaquinone biosynthesis</keyword>
<keyword id="KW-0479">Metal-binding</keyword>
<keyword id="KW-1185">Reference proteome</keyword>
<keyword id="KW-0786">Thiamine pyrophosphate</keyword>
<keyword id="KW-0808">Transferase</keyword>
<proteinExistence type="inferred from homology"/>
<dbReference type="EC" id="2.2.1.9" evidence="1"/>
<dbReference type="EMBL" id="CP000020">
    <property type="protein sequence ID" value="AAW86166.1"/>
    <property type="status" value="ALT_INIT"/>
    <property type="molecule type" value="Genomic_DNA"/>
</dbReference>
<dbReference type="RefSeq" id="WP_011262226.1">
    <property type="nucleotide sequence ID" value="NZ_CAWLES010000001.1"/>
</dbReference>
<dbReference type="RefSeq" id="YP_205054.1">
    <property type="nucleotide sequence ID" value="NC_006840.2"/>
</dbReference>
<dbReference type="SMR" id="Q5E480"/>
<dbReference type="STRING" id="312309.VF_1671"/>
<dbReference type="DNASU" id="3278897"/>
<dbReference type="EnsemblBacteria" id="AAW86166">
    <property type="protein sequence ID" value="AAW86166"/>
    <property type="gene ID" value="VF_1671"/>
</dbReference>
<dbReference type="GeneID" id="54164364"/>
<dbReference type="KEGG" id="vfi:VF_1671"/>
<dbReference type="PATRIC" id="fig|312309.11.peg.1691"/>
<dbReference type="eggNOG" id="COG1165">
    <property type="taxonomic scope" value="Bacteria"/>
</dbReference>
<dbReference type="HOGENOM" id="CLU_006051_3_0_6"/>
<dbReference type="OrthoDB" id="9791859at2"/>
<dbReference type="UniPathway" id="UPA00079"/>
<dbReference type="UniPathway" id="UPA01057">
    <property type="reaction ID" value="UER00164"/>
</dbReference>
<dbReference type="Proteomes" id="UP000000537">
    <property type="component" value="Chromosome I"/>
</dbReference>
<dbReference type="GO" id="GO:0070204">
    <property type="term" value="F:2-succinyl-5-enolpyruvyl-6-hydroxy-3-cyclohexene-1-carboxylic-acid synthase activity"/>
    <property type="evidence" value="ECO:0007669"/>
    <property type="project" value="UniProtKB-UniRule"/>
</dbReference>
<dbReference type="GO" id="GO:0000287">
    <property type="term" value="F:magnesium ion binding"/>
    <property type="evidence" value="ECO:0007669"/>
    <property type="project" value="UniProtKB-UniRule"/>
</dbReference>
<dbReference type="GO" id="GO:0030145">
    <property type="term" value="F:manganese ion binding"/>
    <property type="evidence" value="ECO:0007669"/>
    <property type="project" value="UniProtKB-UniRule"/>
</dbReference>
<dbReference type="GO" id="GO:0030976">
    <property type="term" value="F:thiamine pyrophosphate binding"/>
    <property type="evidence" value="ECO:0007669"/>
    <property type="project" value="UniProtKB-UniRule"/>
</dbReference>
<dbReference type="GO" id="GO:0009234">
    <property type="term" value="P:menaquinone biosynthetic process"/>
    <property type="evidence" value="ECO:0007669"/>
    <property type="project" value="UniProtKB-UniRule"/>
</dbReference>
<dbReference type="CDD" id="cd07037">
    <property type="entry name" value="TPP_PYR_MenD"/>
    <property type="match status" value="1"/>
</dbReference>
<dbReference type="CDD" id="cd02009">
    <property type="entry name" value="TPP_SHCHC_synthase"/>
    <property type="match status" value="1"/>
</dbReference>
<dbReference type="Gene3D" id="3.40.50.970">
    <property type="match status" value="2"/>
</dbReference>
<dbReference type="Gene3D" id="3.40.50.1220">
    <property type="entry name" value="TPP-binding domain"/>
    <property type="match status" value="1"/>
</dbReference>
<dbReference type="HAMAP" id="MF_01659">
    <property type="entry name" value="MenD"/>
    <property type="match status" value="1"/>
</dbReference>
<dbReference type="InterPro" id="IPR029035">
    <property type="entry name" value="DHS-like_NAD/FAD-binding_dom"/>
</dbReference>
<dbReference type="InterPro" id="IPR004433">
    <property type="entry name" value="MenaQ_synth_MenD"/>
</dbReference>
<dbReference type="InterPro" id="IPR032264">
    <property type="entry name" value="MenD_middle"/>
</dbReference>
<dbReference type="InterPro" id="IPR029061">
    <property type="entry name" value="THDP-binding"/>
</dbReference>
<dbReference type="InterPro" id="IPR012001">
    <property type="entry name" value="Thiamin_PyroP_enz_TPP-bd_dom"/>
</dbReference>
<dbReference type="InterPro" id="IPR011766">
    <property type="entry name" value="TPP_enzyme_TPP-bd"/>
</dbReference>
<dbReference type="NCBIfam" id="TIGR00173">
    <property type="entry name" value="menD"/>
    <property type="match status" value="1"/>
</dbReference>
<dbReference type="PANTHER" id="PTHR42916">
    <property type="entry name" value="2-SUCCINYL-5-ENOLPYRUVYL-6-HYDROXY-3-CYCLOHEXENE-1-CARBOXYLATE SYNTHASE"/>
    <property type="match status" value="1"/>
</dbReference>
<dbReference type="PANTHER" id="PTHR42916:SF1">
    <property type="entry name" value="PROTEIN PHYLLO, CHLOROPLASTIC"/>
    <property type="match status" value="1"/>
</dbReference>
<dbReference type="Pfam" id="PF02775">
    <property type="entry name" value="TPP_enzyme_C"/>
    <property type="match status" value="1"/>
</dbReference>
<dbReference type="Pfam" id="PF16582">
    <property type="entry name" value="TPP_enzyme_M_2"/>
    <property type="match status" value="1"/>
</dbReference>
<dbReference type="Pfam" id="PF02776">
    <property type="entry name" value="TPP_enzyme_N"/>
    <property type="match status" value="1"/>
</dbReference>
<dbReference type="PIRSF" id="PIRSF004983">
    <property type="entry name" value="MenD"/>
    <property type="match status" value="1"/>
</dbReference>
<dbReference type="SUPFAM" id="SSF52467">
    <property type="entry name" value="DHS-like NAD/FAD-binding domain"/>
    <property type="match status" value="1"/>
</dbReference>
<dbReference type="SUPFAM" id="SSF52518">
    <property type="entry name" value="Thiamin diphosphate-binding fold (THDP-binding)"/>
    <property type="match status" value="2"/>
</dbReference>
<accession>Q5E480</accession>
<evidence type="ECO:0000255" key="1">
    <source>
        <dbReference type="HAMAP-Rule" id="MF_01659"/>
    </source>
</evidence>
<evidence type="ECO:0000305" key="2"/>
<reference key="1">
    <citation type="journal article" date="2005" name="Proc. Natl. Acad. Sci. U.S.A.">
        <title>Complete genome sequence of Vibrio fischeri: a symbiotic bacterium with pathogenic congeners.</title>
        <authorList>
            <person name="Ruby E.G."/>
            <person name="Urbanowski M."/>
            <person name="Campbell J."/>
            <person name="Dunn A."/>
            <person name="Faini M."/>
            <person name="Gunsalus R."/>
            <person name="Lostroh P."/>
            <person name="Lupp C."/>
            <person name="McCann J."/>
            <person name="Millikan D."/>
            <person name="Schaefer A."/>
            <person name="Stabb E."/>
            <person name="Stevens A."/>
            <person name="Visick K."/>
            <person name="Whistler C."/>
            <person name="Greenberg E.P."/>
        </authorList>
    </citation>
    <scope>NUCLEOTIDE SEQUENCE [LARGE SCALE GENOMIC DNA]</scope>
    <source>
        <strain>ATCC 700601 / ES114</strain>
    </source>
</reference>
<protein>
    <recommendedName>
        <fullName evidence="1">2-succinyl-5-enolpyruvyl-6-hydroxy-3-cyclohexene-1-carboxylate synthase</fullName>
        <shortName evidence="1">SEPHCHC synthase</shortName>
        <ecNumber evidence="1">2.2.1.9</ecNumber>
    </recommendedName>
    <alternativeName>
        <fullName evidence="1">Menaquinone biosynthesis protein MenD</fullName>
    </alternativeName>
</protein>
<sequence>MQPEQQVMLNQVWAELIIEELVRNGVKHICIAPGSRSTPLTLAASEHALLSIHTHFDERGLGFLALGIAKASNDPVAVIVTSGTAVANLLPSVAESGLTKEKLVLLTADRPVELINCGANQAINQQGIFSSHVCHSLQLPSPSQNVPAQWLLSRLDQACFVQQEQGGAIHINCPFPEPFYGKKDDSLLVDYLAPIQNWKADTSSYIQQTPYFSHVTLSPNWMQTARKKGVVIIGKVSLEEANCAAQLAKELGWPVLADPQSGYYSEWAHYDLWLQNSACFELLSEVECVLQFGARLVSKRLGAWLKNYQQAYYLIDPHSELLNESCHAHVRYRADISTWCQTHADSLADRDCVFDHAPSVHWSESLKVASQNALALARSMACNSETLSELSFALTVGQKANDCDWFVGNSLIVRLLDMTGELNQKNVYTNRGASGIDGLVATAVGVQLANDKPLLALVGDTSLLYDLNSLALLKQATQPMVVVVMNNDGGGIFDLLPVNEKKKDDFYRMPHQLEFSHAAAMFGLSYHRPETLSCAMSMINDGLEKGIHLIEINTPAGQSGEELTRLFQTIQHAALF</sequence>
<comment type="function">
    <text evidence="1">Catalyzes the thiamine diphosphate-dependent decarboxylation of 2-oxoglutarate and the subsequent addition of the resulting succinic semialdehyde-thiamine pyrophosphate anion to isochorismate to yield 2-succinyl-5-enolpyruvyl-6-hydroxy-3-cyclohexene-1-carboxylate (SEPHCHC).</text>
</comment>
<comment type="catalytic activity">
    <reaction evidence="1">
        <text>isochorismate + 2-oxoglutarate + H(+) = 5-enolpyruvoyl-6-hydroxy-2-succinyl-cyclohex-3-ene-1-carboxylate + CO2</text>
        <dbReference type="Rhea" id="RHEA:25593"/>
        <dbReference type="ChEBI" id="CHEBI:15378"/>
        <dbReference type="ChEBI" id="CHEBI:16526"/>
        <dbReference type="ChEBI" id="CHEBI:16810"/>
        <dbReference type="ChEBI" id="CHEBI:29780"/>
        <dbReference type="ChEBI" id="CHEBI:58818"/>
        <dbReference type="EC" id="2.2.1.9"/>
    </reaction>
</comment>
<comment type="cofactor">
    <cofactor evidence="1">
        <name>Mg(2+)</name>
        <dbReference type="ChEBI" id="CHEBI:18420"/>
    </cofactor>
    <cofactor evidence="1">
        <name>Mn(2+)</name>
        <dbReference type="ChEBI" id="CHEBI:29035"/>
    </cofactor>
</comment>
<comment type="cofactor">
    <cofactor evidence="1">
        <name>thiamine diphosphate</name>
        <dbReference type="ChEBI" id="CHEBI:58937"/>
    </cofactor>
    <text evidence="1">Binds 1 thiamine pyrophosphate per subunit.</text>
</comment>
<comment type="pathway">
    <text evidence="1">Quinol/quinone metabolism; 1,4-dihydroxy-2-naphthoate biosynthesis; 1,4-dihydroxy-2-naphthoate from chorismate: step 2/7.</text>
</comment>
<comment type="pathway">
    <text evidence="1">Quinol/quinone metabolism; menaquinone biosynthesis.</text>
</comment>
<comment type="subunit">
    <text evidence="1">Homodimer.</text>
</comment>
<comment type="similarity">
    <text evidence="1">Belongs to the TPP enzyme family. MenD subfamily.</text>
</comment>
<comment type="sequence caution" evidence="2">
    <conflict type="erroneous initiation">
        <sequence resource="EMBL-CDS" id="AAW86166"/>
    </conflict>
</comment>
<feature type="chain" id="PRO_0000341884" description="2-succinyl-5-enolpyruvyl-6-hydroxy-3-cyclohexene-1-carboxylate synthase">
    <location>
        <begin position="1"/>
        <end position="576"/>
    </location>
</feature>
<name>MEND_ALIF1</name>